<feature type="chain" id="PRO_0000089958" description="RNA transcription, translation and transport factor protein">
    <location>
        <begin position="1"/>
        <end position="244"/>
    </location>
</feature>
<feature type="modified residue" description="N6-acetyllysine" evidence="1">
    <location>
        <position position="20"/>
    </location>
</feature>
<feature type="modified residue" description="N6-acetyllysine" evidence="1">
    <location>
        <position position="62"/>
    </location>
</feature>
<feature type="modified residue" description="N6-acetyllysine" evidence="1">
    <location>
        <position position="98"/>
    </location>
</feature>
<organism>
    <name type="scientific">Pongo abelii</name>
    <name type="common">Sumatran orangutan</name>
    <name type="synonym">Pongo pygmaeus abelii</name>
    <dbReference type="NCBI Taxonomy" id="9601"/>
    <lineage>
        <taxon>Eukaryota</taxon>
        <taxon>Metazoa</taxon>
        <taxon>Chordata</taxon>
        <taxon>Craniata</taxon>
        <taxon>Vertebrata</taxon>
        <taxon>Euteleostomi</taxon>
        <taxon>Mammalia</taxon>
        <taxon>Eutheria</taxon>
        <taxon>Euarchontoglires</taxon>
        <taxon>Primates</taxon>
        <taxon>Haplorrhini</taxon>
        <taxon>Catarrhini</taxon>
        <taxon>Hominidae</taxon>
        <taxon>Pongo</taxon>
    </lineage>
</organism>
<dbReference type="EMBL" id="CR859770">
    <property type="protein sequence ID" value="CAH91928.1"/>
    <property type="molecule type" value="mRNA"/>
</dbReference>
<dbReference type="RefSeq" id="NP_001126118.1">
    <property type="nucleotide sequence ID" value="NM_001132646.2"/>
</dbReference>
<dbReference type="SMR" id="Q5R8I2"/>
<dbReference type="FunCoup" id="Q5R8I2">
    <property type="interactions" value="2802"/>
</dbReference>
<dbReference type="STRING" id="9601.ENSPPYP00000006606"/>
<dbReference type="Ensembl" id="ENSPPYT00000034780.1">
    <property type="protein sequence ID" value="ENSPPYP00000041009.1"/>
    <property type="gene ID" value="ENSPPYG00000037492.1"/>
</dbReference>
<dbReference type="GeneID" id="100173074"/>
<dbReference type="KEGG" id="pon:100173074"/>
<dbReference type="CTD" id="51637"/>
<dbReference type="eggNOG" id="KOG4380">
    <property type="taxonomic scope" value="Eukaryota"/>
</dbReference>
<dbReference type="GeneTree" id="ENSGT00390000005163"/>
<dbReference type="HOGENOM" id="CLU_075085_0_0_1"/>
<dbReference type="InParanoid" id="Q5R8I2"/>
<dbReference type="OMA" id="YPMRILR"/>
<dbReference type="OrthoDB" id="514167at2759"/>
<dbReference type="TreeFam" id="TF323606"/>
<dbReference type="Proteomes" id="UP000001595">
    <property type="component" value="Chromosome 14"/>
</dbReference>
<dbReference type="GO" id="GO:0005813">
    <property type="term" value="C:centrosome"/>
    <property type="evidence" value="ECO:0000250"/>
    <property type="project" value="UniProtKB"/>
</dbReference>
<dbReference type="GO" id="GO:0005737">
    <property type="term" value="C:cytoplasm"/>
    <property type="evidence" value="ECO:0000250"/>
    <property type="project" value="UniProtKB"/>
</dbReference>
<dbReference type="GO" id="GO:0005829">
    <property type="term" value="C:cytosol"/>
    <property type="evidence" value="ECO:0007669"/>
    <property type="project" value="UniProtKB-SubCell"/>
</dbReference>
<dbReference type="GO" id="GO:0072686">
    <property type="term" value="C:mitotic spindle"/>
    <property type="evidence" value="ECO:0000250"/>
    <property type="project" value="UniProtKB"/>
</dbReference>
<dbReference type="GO" id="GO:0005654">
    <property type="term" value="C:nucleoplasm"/>
    <property type="evidence" value="ECO:0007669"/>
    <property type="project" value="Ensembl"/>
</dbReference>
<dbReference type="GO" id="GO:0005634">
    <property type="term" value="C:nucleus"/>
    <property type="evidence" value="ECO:0000250"/>
    <property type="project" value="UniProtKB"/>
</dbReference>
<dbReference type="GO" id="GO:0048471">
    <property type="term" value="C:perinuclear region of cytoplasm"/>
    <property type="evidence" value="ECO:0000250"/>
    <property type="project" value="UniProtKB"/>
</dbReference>
<dbReference type="GO" id="GO:0072669">
    <property type="term" value="C:tRNA-splicing ligase complex"/>
    <property type="evidence" value="ECO:0000250"/>
    <property type="project" value="UniProtKB"/>
</dbReference>
<dbReference type="GO" id="GO:0042802">
    <property type="term" value="F:identical protein binding"/>
    <property type="evidence" value="ECO:0007669"/>
    <property type="project" value="Ensembl"/>
</dbReference>
<dbReference type="GO" id="GO:0003723">
    <property type="term" value="F:RNA binding"/>
    <property type="evidence" value="ECO:0000250"/>
    <property type="project" value="UniProtKB"/>
</dbReference>
<dbReference type="GO" id="GO:0000993">
    <property type="term" value="F:RNA polymerase II complex binding"/>
    <property type="evidence" value="ECO:0000250"/>
    <property type="project" value="UniProtKB"/>
</dbReference>
<dbReference type="GO" id="GO:0006469">
    <property type="term" value="P:negative regulation of protein kinase activity"/>
    <property type="evidence" value="ECO:0000250"/>
    <property type="project" value="UniProtKB"/>
</dbReference>
<dbReference type="GO" id="GO:0045944">
    <property type="term" value="P:positive regulation of transcription by RNA polymerase II"/>
    <property type="evidence" value="ECO:0000250"/>
    <property type="project" value="UniProtKB"/>
</dbReference>
<dbReference type="GO" id="GO:0006388">
    <property type="term" value="P:tRNA splicing, via endonucleolytic cleavage and ligation"/>
    <property type="evidence" value="ECO:0000250"/>
    <property type="project" value="UniProtKB"/>
</dbReference>
<dbReference type="InterPro" id="IPR019265">
    <property type="entry name" value="RTRAF"/>
</dbReference>
<dbReference type="PANTHER" id="PTHR15924">
    <property type="entry name" value="CLE"/>
    <property type="match status" value="1"/>
</dbReference>
<dbReference type="Pfam" id="PF10036">
    <property type="entry name" value="RLL"/>
    <property type="match status" value="1"/>
</dbReference>
<protein>
    <recommendedName>
        <fullName evidence="1">RNA transcription, translation and transport factor protein</fullName>
    </recommendedName>
</protein>
<sequence length="244" mass="28068">MFRRKLTALDYHNPAGFNCKDETEFRNFIVWLEDQKIRHYKIEDRGNLRNIHSSDWPKFFEKYLRDVNCPFKIQDRQEAIDWLLGLAVRLEYGDNAEKYKDLVPDNSKTADNATKNAEPLINLDVNNPDFKAGVMALANLLQIQRHDDYLVMLKAIRILVQERLTQDAVAKANQTKEGLPVALDKHILGFDTGDAVLNEAAQILRLLHIEELRELQTKINEAIVAVQAIIADPKTDHRLGKVGR</sequence>
<comment type="function">
    <text evidence="1">RNA-binding protein involved in modulation of mRNA transcription by Polymerase II. Component of the tRNA-splicing ligase complex and is required for tRNA ligation. May be required for RNA transport.</text>
</comment>
<comment type="subunit">
    <text evidence="1">Homodimer. Interacts with FAM98A (via N- and C-terminus). Interacts with NIN; which may prevent phosphorylation of NIN. Interacts with POLR2A. Component of a tRNA-splicing ligase complex.</text>
</comment>
<comment type="subcellular location">
    <subcellularLocation>
        <location evidence="1">Nucleus</location>
    </subcellularLocation>
    <subcellularLocation>
        <location evidence="1">Cytoplasm</location>
        <location evidence="1">Cytosol</location>
    </subcellularLocation>
    <subcellularLocation>
        <location evidence="1">Cytoplasm</location>
        <location evidence="1">Perinuclear region</location>
    </subcellularLocation>
    <subcellularLocation>
        <location evidence="1">Cytoplasm</location>
        <location evidence="1">Cytoskeleton</location>
        <location evidence="1">Microtubule organizing center</location>
        <location evidence="1">Centrosome</location>
    </subcellularLocation>
    <text evidence="1">May localize at the centrosome during mitosis. Shuttles between the cytosol and the nucleus: enters into the nucleus in case of active transcription while it accumulates in cytosol when transcription level is low.</text>
</comment>
<comment type="similarity">
    <text evidence="2">Belongs to the RTRAF family.</text>
</comment>
<name>RTRAF_PONAB</name>
<proteinExistence type="evidence at transcript level"/>
<accession>Q5R8I2</accession>
<keyword id="KW-0007">Acetylation</keyword>
<keyword id="KW-0963">Cytoplasm</keyword>
<keyword id="KW-0206">Cytoskeleton</keyword>
<keyword id="KW-0539">Nucleus</keyword>
<keyword id="KW-1185">Reference proteome</keyword>
<keyword id="KW-0694">RNA-binding</keyword>
<keyword id="KW-0804">Transcription</keyword>
<keyword id="KW-0805">Transcription regulation</keyword>
<reference key="1">
    <citation type="submission" date="2004-11" db="EMBL/GenBank/DDBJ databases">
        <authorList>
            <consortium name="The German cDNA consortium"/>
        </authorList>
    </citation>
    <scope>NUCLEOTIDE SEQUENCE [LARGE SCALE MRNA]</scope>
    <source>
        <tissue>Heart</tissue>
    </source>
</reference>
<evidence type="ECO:0000250" key="1">
    <source>
        <dbReference type="UniProtKB" id="Q9Y224"/>
    </source>
</evidence>
<evidence type="ECO:0000305" key="2"/>
<gene>
    <name evidence="1" type="primary">RTRAF</name>
</gene>